<protein>
    <recommendedName>
        <fullName evidence="1">Imidazoleglycerol-phosphate dehydratase</fullName>
        <shortName evidence="1">IGPD</shortName>
        <ecNumber evidence="1">4.2.1.19</ecNumber>
    </recommendedName>
</protein>
<gene>
    <name evidence="1" type="primary">hisB</name>
    <name type="ordered locus">P9301_03051</name>
</gene>
<dbReference type="EC" id="4.2.1.19" evidence="1"/>
<dbReference type="EMBL" id="CP000576">
    <property type="protein sequence ID" value="ABO16928.1"/>
    <property type="molecule type" value="Genomic_DNA"/>
</dbReference>
<dbReference type="RefSeq" id="WP_011862321.1">
    <property type="nucleotide sequence ID" value="NC_009091.1"/>
</dbReference>
<dbReference type="SMR" id="A3PB03"/>
<dbReference type="STRING" id="167546.P9301_03051"/>
<dbReference type="KEGG" id="pmg:P9301_03051"/>
<dbReference type="eggNOG" id="COG0131">
    <property type="taxonomic scope" value="Bacteria"/>
</dbReference>
<dbReference type="HOGENOM" id="CLU_044308_3_0_3"/>
<dbReference type="OrthoDB" id="9790411at2"/>
<dbReference type="UniPathway" id="UPA00031">
    <property type="reaction ID" value="UER00011"/>
</dbReference>
<dbReference type="Proteomes" id="UP000001430">
    <property type="component" value="Chromosome"/>
</dbReference>
<dbReference type="GO" id="GO:0005737">
    <property type="term" value="C:cytoplasm"/>
    <property type="evidence" value="ECO:0007669"/>
    <property type="project" value="UniProtKB-SubCell"/>
</dbReference>
<dbReference type="GO" id="GO:0004424">
    <property type="term" value="F:imidazoleglycerol-phosphate dehydratase activity"/>
    <property type="evidence" value="ECO:0007669"/>
    <property type="project" value="UniProtKB-UniRule"/>
</dbReference>
<dbReference type="GO" id="GO:0000105">
    <property type="term" value="P:L-histidine biosynthetic process"/>
    <property type="evidence" value="ECO:0007669"/>
    <property type="project" value="UniProtKB-UniRule"/>
</dbReference>
<dbReference type="CDD" id="cd07914">
    <property type="entry name" value="IGPD"/>
    <property type="match status" value="1"/>
</dbReference>
<dbReference type="FunFam" id="3.30.230.40:FF:000002">
    <property type="entry name" value="Imidazoleglycerol-phosphate dehydratase"/>
    <property type="match status" value="1"/>
</dbReference>
<dbReference type="FunFam" id="3.30.230.40:FF:000003">
    <property type="entry name" value="Imidazoleglycerol-phosphate dehydratase HisB"/>
    <property type="match status" value="1"/>
</dbReference>
<dbReference type="Gene3D" id="3.30.230.40">
    <property type="entry name" value="Imidazole glycerol phosphate dehydratase, domain 1"/>
    <property type="match status" value="2"/>
</dbReference>
<dbReference type="HAMAP" id="MF_00076">
    <property type="entry name" value="HisB"/>
    <property type="match status" value="1"/>
</dbReference>
<dbReference type="InterPro" id="IPR038494">
    <property type="entry name" value="IGPD_sf"/>
</dbReference>
<dbReference type="InterPro" id="IPR000807">
    <property type="entry name" value="ImidazoleglycerolP_deHydtase"/>
</dbReference>
<dbReference type="InterPro" id="IPR020565">
    <property type="entry name" value="ImidazoleglycerP_deHydtase_CS"/>
</dbReference>
<dbReference type="InterPro" id="IPR020568">
    <property type="entry name" value="Ribosomal_Su5_D2-typ_SF"/>
</dbReference>
<dbReference type="NCBIfam" id="NF002108">
    <property type="entry name" value="PRK00951.1-3"/>
    <property type="match status" value="1"/>
</dbReference>
<dbReference type="NCBIfam" id="NF002109">
    <property type="entry name" value="PRK00951.1-5"/>
    <property type="match status" value="1"/>
</dbReference>
<dbReference type="NCBIfam" id="NF002111">
    <property type="entry name" value="PRK00951.2-1"/>
    <property type="match status" value="1"/>
</dbReference>
<dbReference type="NCBIfam" id="NF002114">
    <property type="entry name" value="PRK00951.2-4"/>
    <property type="match status" value="1"/>
</dbReference>
<dbReference type="PANTHER" id="PTHR23133:SF2">
    <property type="entry name" value="IMIDAZOLEGLYCEROL-PHOSPHATE DEHYDRATASE"/>
    <property type="match status" value="1"/>
</dbReference>
<dbReference type="PANTHER" id="PTHR23133">
    <property type="entry name" value="IMIDAZOLEGLYCEROL-PHOSPHATE DEHYDRATASE HIS7"/>
    <property type="match status" value="1"/>
</dbReference>
<dbReference type="Pfam" id="PF00475">
    <property type="entry name" value="IGPD"/>
    <property type="match status" value="1"/>
</dbReference>
<dbReference type="SUPFAM" id="SSF54211">
    <property type="entry name" value="Ribosomal protein S5 domain 2-like"/>
    <property type="match status" value="2"/>
</dbReference>
<dbReference type="PROSITE" id="PS00954">
    <property type="entry name" value="IGP_DEHYDRATASE_1"/>
    <property type="match status" value="1"/>
</dbReference>
<dbReference type="PROSITE" id="PS00955">
    <property type="entry name" value="IGP_DEHYDRATASE_2"/>
    <property type="match status" value="1"/>
</dbReference>
<keyword id="KW-0028">Amino-acid biosynthesis</keyword>
<keyword id="KW-0963">Cytoplasm</keyword>
<keyword id="KW-0368">Histidine biosynthesis</keyword>
<keyword id="KW-0456">Lyase</keyword>
<keyword id="KW-1185">Reference proteome</keyword>
<name>HIS7_PROM0</name>
<accession>A3PB03</accession>
<evidence type="ECO:0000255" key="1">
    <source>
        <dbReference type="HAMAP-Rule" id="MF_00076"/>
    </source>
</evidence>
<reference key="1">
    <citation type="journal article" date="2007" name="PLoS Genet.">
        <title>Patterns and implications of gene gain and loss in the evolution of Prochlorococcus.</title>
        <authorList>
            <person name="Kettler G.C."/>
            <person name="Martiny A.C."/>
            <person name="Huang K."/>
            <person name="Zucker J."/>
            <person name="Coleman M.L."/>
            <person name="Rodrigue S."/>
            <person name="Chen F."/>
            <person name="Lapidus A."/>
            <person name="Ferriera S."/>
            <person name="Johnson J."/>
            <person name="Steglich C."/>
            <person name="Church G.M."/>
            <person name="Richardson P."/>
            <person name="Chisholm S.W."/>
        </authorList>
    </citation>
    <scope>NUCLEOTIDE SEQUENCE [LARGE SCALE GENOMIC DNA]</scope>
    <source>
        <strain>MIT 9301</strain>
    </source>
</reference>
<proteinExistence type="inferred from homology"/>
<organism>
    <name type="scientific">Prochlorococcus marinus (strain MIT 9301)</name>
    <dbReference type="NCBI Taxonomy" id="167546"/>
    <lineage>
        <taxon>Bacteria</taxon>
        <taxon>Bacillati</taxon>
        <taxon>Cyanobacteriota</taxon>
        <taxon>Cyanophyceae</taxon>
        <taxon>Synechococcales</taxon>
        <taxon>Prochlorococcaceae</taxon>
        <taxon>Prochlorococcus</taxon>
    </lineage>
</organism>
<feature type="chain" id="PRO_1000010321" description="Imidazoleglycerol-phosphate dehydratase">
    <location>
        <begin position="1"/>
        <end position="201"/>
    </location>
</feature>
<sequence>MSSLRQSEIKRKTNETDISVFINLDGNGISEIDTGIPFLDHMLHQISSHGLFDLKIRAIGDTHIDDHHTNEDVGIALGKAFSKALGERKGICRFGHFFAPLDEALVQVTLDCSGRPHLSYDLQLKAPRIGNYDTELVKEFFIAFVNNSGITLHINQIRGSNSHHIVEACFKAFSRAMRMATEIDLRRSGSIPSSKGMLENQ</sequence>
<comment type="catalytic activity">
    <reaction evidence="1">
        <text>D-erythro-1-(imidazol-4-yl)glycerol 3-phosphate = 3-(imidazol-4-yl)-2-oxopropyl phosphate + H2O</text>
        <dbReference type="Rhea" id="RHEA:11040"/>
        <dbReference type="ChEBI" id="CHEBI:15377"/>
        <dbReference type="ChEBI" id="CHEBI:57766"/>
        <dbReference type="ChEBI" id="CHEBI:58278"/>
        <dbReference type="EC" id="4.2.1.19"/>
    </reaction>
</comment>
<comment type="pathway">
    <text evidence="1">Amino-acid biosynthesis; L-histidine biosynthesis; L-histidine from 5-phospho-alpha-D-ribose 1-diphosphate: step 6/9.</text>
</comment>
<comment type="subcellular location">
    <subcellularLocation>
        <location evidence="1">Cytoplasm</location>
    </subcellularLocation>
</comment>
<comment type="similarity">
    <text evidence="1">Belongs to the imidazoleglycerol-phosphate dehydratase family.</text>
</comment>